<organism>
    <name type="scientific">Pongo abelii</name>
    <name type="common">Sumatran orangutan</name>
    <name type="synonym">Pongo pygmaeus abelii</name>
    <dbReference type="NCBI Taxonomy" id="9601"/>
    <lineage>
        <taxon>Eukaryota</taxon>
        <taxon>Metazoa</taxon>
        <taxon>Chordata</taxon>
        <taxon>Craniata</taxon>
        <taxon>Vertebrata</taxon>
        <taxon>Euteleostomi</taxon>
        <taxon>Mammalia</taxon>
        <taxon>Eutheria</taxon>
        <taxon>Euarchontoglires</taxon>
        <taxon>Primates</taxon>
        <taxon>Haplorrhini</taxon>
        <taxon>Catarrhini</taxon>
        <taxon>Hominidae</taxon>
        <taxon>Pongo</taxon>
    </lineage>
</organism>
<proteinExistence type="evidence at transcript level"/>
<reference key="1">
    <citation type="submission" date="2004-11" db="EMBL/GenBank/DDBJ databases">
        <authorList>
            <consortium name="The German cDNA consortium"/>
        </authorList>
    </citation>
    <scope>NUCLEOTIDE SEQUENCE [LARGE SCALE MRNA]</scope>
    <source>
        <tissue>Brain cortex</tissue>
    </source>
</reference>
<gene>
    <name type="primary">FDFT1</name>
</gene>
<name>FDFT_PONAB</name>
<evidence type="ECO:0000250" key="1">
    <source>
        <dbReference type="UniProtKB" id="P37268"/>
    </source>
</evidence>
<evidence type="ECO:0000250" key="2">
    <source>
        <dbReference type="UniProtKB" id="Q02769"/>
    </source>
</evidence>
<evidence type="ECO:0000255" key="3"/>
<evidence type="ECO:0000305" key="4"/>
<sequence>MEFVKCLGHPEEFYNLVRFRIGGKRKVMPKMDQDSLSSSLKTCYKYLNQTSRSFAAVIQALDGEMRNAVCIFYLVLRALDTLEDDMTISVEKKVPLLHNFHSFLYQPDWRFMESKEKDRQVLEDFPTISLEFRNLAEKYQTVIADICRRMGIGMAEFLDKHVTSEQEWDKYCHYVAGLVGIGLSRLFSASEFEDPLVGEDTERANSMGLFLQKTNIIRDYLEDQQGGREFWPQEVWSRYVKKLGDFAKPENIDLAVQCLNELITNALHHIPDVITYLSRLRNQSVFNFCAIPQVMAIATLAACYNNQQVFKGAVKIRKGQAVTLMMDATNMPAVKAIIYQYMEEIYHRIPDSDPSSSKTRQIISTIRTQNLPNCQLISRSHYSPIYLSFVMLLAALSWQYLTTLSQVTEDYVQTGEH</sequence>
<accession>Q5R6U3</accession>
<protein>
    <recommendedName>
        <fullName>Squalene synthase</fullName>
        <shortName>SQS</shortName>
        <shortName>SS</shortName>
        <ecNumber evidence="1">2.5.1.21</ecNumber>
    </recommendedName>
    <alternativeName>
        <fullName>FPP:FPP farnesyltransferase</fullName>
    </alternativeName>
    <alternativeName>
        <fullName>Farnesyl-diphosphate farnesyltransferase</fullName>
    </alternativeName>
</protein>
<comment type="function">
    <text evidence="1">Catalyzes the condensation of 2 farnesyl pyrophosphate (FPP) moieties to form squalene. Proceeds in two distinct steps. In the first half-reaction, two molecules of FPP react to form the stable presqualene diphosphate intermediate (PSQPP), with concomitant release of a proton and a molecule of inorganic diphosphate. In the second half-reaction, PSQPP undergoes heterolysis, isomerization, and reduction with NADPH or NADH to form squalene. It is the first committed enzyme of the sterol biosynthesis pathway.</text>
</comment>
<comment type="catalytic activity">
    <reaction evidence="1">
        <text>2 (2E,6E)-farnesyl diphosphate + NADPH + H(+) = squalene + 2 diphosphate + NADP(+)</text>
        <dbReference type="Rhea" id="RHEA:32295"/>
        <dbReference type="ChEBI" id="CHEBI:15378"/>
        <dbReference type="ChEBI" id="CHEBI:15440"/>
        <dbReference type="ChEBI" id="CHEBI:33019"/>
        <dbReference type="ChEBI" id="CHEBI:57783"/>
        <dbReference type="ChEBI" id="CHEBI:58349"/>
        <dbReference type="ChEBI" id="CHEBI:175763"/>
        <dbReference type="EC" id="2.5.1.21"/>
    </reaction>
    <physiologicalReaction direction="left-to-right" evidence="1">
        <dbReference type="Rhea" id="RHEA:32296"/>
    </physiologicalReaction>
</comment>
<comment type="catalytic activity">
    <reaction evidence="1">
        <text>2 (2E,6E)-farnesyl diphosphate + NADH + H(+) = squalene + 2 diphosphate + NAD(+)</text>
        <dbReference type="Rhea" id="RHEA:32299"/>
        <dbReference type="ChEBI" id="CHEBI:15378"/>
        <dbReference type="ChEBI" id="CHEBI:15440"/>
        <dbReference type="ChEBI" id="CHEBI:33019"/>
        <dbReference type="ChEBI" id="CHEBI:57540"/>
        <dbReference type="ChEBI" id="CHEBI:57945"/>
        <dbReference type="ChEBI" id="CHEBI:175763"/>
        <dbReference type="EC" id="2.5.1.21"/>
    </reaction>
    <physiologicalReaction direction="left-to-right" evidence="1">
        <dbReference type="Rhea" id="RHEA:32300"/>
    </physiologicalReaction>
</comment>
<comment type="catalytic activity">
    <reaction evidence="1">
        <text>presqualene diphosphate + NADH + H(+) = squalene + diphosphate + NAD(+)</text>
        <dbReference type="Rhea" id="RHEA:22228"/>
        <dbReference type="ChEBI" id="CHEBI:15378"/>
        <dbReference type="ChEBI" id="CHEBI:15440"/>
        <dbReference type="ChEBI" id="CHEBI:33019"/>
        <dbReference type="ChEBI" id="CHEBI:57310"/>
        <dbReference type="ChEBI" id="CHEBI:57540"/>
        <dbReference type="ChEBI" id="CHEBI:57945"/>
    </reaction>
    <physiologicalReaction direction="left-to-right" evidence="1">
        <dbReference type="Rhea" id="RHEA:22229"/>
    </physiologicalReaction>
</comment>
<comment type="catalytic activity">
    <reaction evidence="1">
        <text>presqualene diphosphate + NADPH + H(+) = squalene + diphosphate + NADP(+)</text>
        <dbReference type="Rhea" id="RHEA:22232"/>
        <dbReference type="ChEBI" id="CHEBI:15378"/>
        <dbReference type="ChEBI" id="CHEBI:15440"/>
        <dbReference type="ChEBI" id="CHEBI:33019"/>
        <dbReference type="ChEBI" id="CHEBI:57310"/>
        <dbReference type="ChEBI" id="CHEBI:57783"/>
        <dbReference type="ChEBI" id="CHEBI:58349"/>
    </reaction>
    <physiologicalReaction direction="left-to-right" evidence="1">
        <dbReference type="Rhea" id="RHEA:22233"/>
    </physiologicalReaction>
</comment>
<comment type="catalytic activity">
    <reaction evidence="1">
        <text>2 (2E,6E)-farnesyl diphosphate = presqualene diphosphate + diphosphate</text>
        <dbReference type="Rhea" id="RHEA:22672"/>
        <dbReference type="ChEBI" id="CHEBI:33019"/>
        <dbReference type="ChEBI" id="CHEBI:57310"/>
        <dbReference type="ChEBI" id="CHEBI:175763"/>
    </reaction>
    <physiologicalReaction direction="left-to-right" evidence="1">
        <dbReference type="Rhea" id="RHEA:22673"/>
    </physiologicalReaction>
</comment>
<comment type="cofactor">
    <cofactor evidence="1">
        <name>Mg(2+)</name>
        <dbReference type="ChEBI" id="CHEBI:18420"/>
    </cofactor>
</comment>
<comment type="pathway">
    <text evidence="4">Terpene metabolism; lanosterol biosynthesis; lanosterol from farnesyl diphosphate: step 1/3.</text>
</comment>
<comment type="subcellular location">
    <subcellularLocation>
        <location evidence="2">Endoplasmic reticulum membrane</location>
        <topology evidence="3">Multi-pass membrane protein</topology>
    </subcellularLocation>
</comment>
<comment type="similarity">
    <text evidence="4">Belongs to the phytoene/squalene synthase family.</text>
</comment>
<keyword id="KW-0152">Cholesterol biosynthesis</keyword>
<keyword id="KW-0153">Cholesterol metabolism</keyword>
<keyword id="KW-0256">Endoplasmic reticulum</keyword>
<keyword id="KW-0414">Isoprene biosynthesis</keyword>
<keyword id="KW-0444">Lipid biosynthesis</keyword>
<keyword id="KW-0443">Lipid metabolism</keyword>
<keyword id="KW-0460">Magnesium</keyword>
<keyword id="KW-0472">Membrane</keyword>
<keyword id="KW-0479">Metal-binding</keyword>
<keyword id="KW-0511">Multifunctional enzyme</keyword>
<keyword id="KW-0520">NAD</keyword>
<keyword id="KW-0521">NADP</keyword>
<keyword id="KW-1185">Reference proteome</keyword>
<keyword id="KW-0752">Steroid biosynthesis</keyword>
<keyword id="KW-0753">Steroid metabolism</keyword>
<keyword id="KW-0756">Sterol biosynthesis</keyword>
<keyword id="KW-1207">Sterol metabolism</keyword>
<keyword id="KW-0808">Transferase</keyword>
<keyword id="KW-0812">Transmembrane</keyword>
<keyword id="KW-1133">Transmembrane helix</keyword>
<dbReference type="EC" id="2.5.1.21" evidence="1"/>
<dbReference type="EMBL" id="CR860391">
    <property type="protein sequence ID" value="CAH92517.1"/>
    <property type="molecule type" value="mRNA"/>
</dbReference>
<dbReference type="RefSeq" id="NP_001126476.1">
    <property type="nucleotide sequence ID" value="NM_001133004.2"/>
</dbReference>
<dbReference type="SMR" id="Q5R6U3"/>
<dbReference type="FunCoup" id="Q5R6U3">
    <property type="interactions" value="1145"/>
</dbReference>
<dbReference type="STRING" id="9601.ENSPPYP00000020559"/>
<dbReference type="Ensembl" id="ENSPPYT00000021386.2">
    <property type="protein sequence ID" value="ENSPPYP00000020559.1"/>
    <property type="gene ID" value="ENSPPYG00000018346.3"/>
</dbReference>
<dbReference type="GeneID" id="100173463"/>
<dbReference type="KEGG" id="pon:100173463"/>
<dbReference type="CTD" id="2222"/>
<dbReference type="eggNOG" id="KOG1459">
    <property type="taxonomic scope" value="Eukaryota"/>
</dbReference>
<dbReference type="GeneTree" id="ENSGT00390000016034"/>
<dbReference type="InParanoid" id="Q5R6U3"/>
<dbReference type="OrthoDB" id="431150at2759"/>
<dbReference type="TreeFam" id="TF105316"/>
<dbReference type="UniPathway" id="UPA00767">
    <property type="reaction ID" value="UER00751"/>
</dbReference>
<dbReference type="Proteomes" id="UP000001595">
    <property type="component" value="Chromosome 8"/>
</dbReference>
<dbReference type="GO" id="GO:0005789">
    <property type="term" value="C:endoplasmic reticulum membrane"/>
    <property type="evidence" value="ECO:0000250"/>
    <property type="project" value="UniProtKB"/>
</dbReference>
<dbReference type="GO" id="GO:0046872">
    <property type="term" value="F:metal ion binding"/>
    <property type="evidence" value="ECO:0007669"/>
    <property type="project" value="UniProtKB-KW"/>
</dbReference>
<dbReference type="GO" id="GO:0051996">
    <property type="term" value="F:squalene synthase [NAD(P)H] activity"/>
    <property type="evidence" value="ECO:0007669"/>
    <property type="project" value="UniProtKB-EC"/>
</dbReference>
<dbReference type="GO" id="GO:0006695">
    <property type="term" value="P:cholesterol biosynthetic process"/>
    <property type="evidence" value="ECO:0007669"/>
    <property type="project" value="UniProtKB-KW"/>
</dbReference>
<dbReference type="GO" id="GO:0045338">
    <property type="term" value="P:farnesyl diphosphate metabolic process"/>
    <property type="evidence" value="ECO:0007669"/>
    <property type="project" value="InterPro"/>
</dbReference>
<dbReference type="GO" id="GO:0008299">
    <property type="term" value="P:isoprenoid biosynthetic process"/>
    <property type="evidence" value="ECO:0007669"/>
    <property type="project" value="UniProtKB-KW"/>
</dbReference>
<dbReference type="CDD" id="cd00683">
    <property type="entry name" value="Trans_IPPS_HH"/>
    <property type="match status" value="1"/>
</dbReference>
<dbReference type="FunFam" id="1.10.600.10:FF:000053">
    <property type="entry name" value="Squalene synthase"/>
    <property type="match status" value="1"/>
</dbReference>
<dbReference type="Gene3D" id="1.10.600.10">
    <property type="entry name" value="Farnesyl Diphosphate Synthase"/>
    <property type="match status" value="1"/>
</dbReference>
<dbReference type="InterPro" id="IPR008949">
    <property type="entry name" value="Isoprenoid_synthase_dom_sf"/>
</dbReference>
<dbReference type="InterPro" id="IPR002060">
    <property type="entry name" value="Squ/phyt_synthse"/>
</dbReference>
<dbReference type="InterPro" id="IPR006449">
    <property type="entry name" value="Squal_synth-like"/>
</dbReference>
<dbReference type="InterPro" id="IPR019845">
    <property type="entry name" value="Squalene/phytoene_synthase_CS"/>
</dbReference>
<dbReference type="InterPro" id="IPR044844">
    <property type="entry name" value="Trans_IPPS_euk-type"/>
</dbReference>
<dbReference type="InterPro" id="IPR033904">
    <property type="entry name" value="Trans_IPPS_HH"/>
</dbReference>
<dbReference type="NCBIfam" id="TIGR01559">
    <property type="entry name" value="squal_synth"/>
    <property type="match status" value="1"/>
</dbReference>
<dbReference type="PANTHER" id="PTHR11626">
    <property type="entry name" value="FARNESYL-DIPHOSPHATE FARNESYLTRANSFERASE"/>
    <property type="match status" value="1"/>
</dbReference>
<dbReference type="PANTHER" id="PTHR11626:SF2">
    <property type="entry name" value="SQUALENE SYNTHASE"/>
    <property type="match status" value="1"/>
</dbReference>
<dbReference type="Pfam" id="PF00494">
    <property type="entry name" value="SQS_PSY"/>
    <property type="match status" value="1"/>
</dbReference>
<dbReference type="SFLD" id="SFLDS00005">
    <property type="entry name" value="Isoprenoid_Synthase_Type_I"/>
    <property type="match status" value="1"/>
</dbReference>
<dbReference type="SFLD" id="SFLDG01018">
    <property type="entry name" value="Squalene/Phytoene_Synthase_Lik"/>
    <property type="match status" value="1"/>
</dbReference>
<dbReference type="SUPFAM" id="SSF48576">
    <property type="entry name" value="Terpenoid synthases"/>
    <property type="match status" value="1"/>
</dbReference>
<dbReference type="PROSITE" id="PS01044">
    <property type="entry name" value="SQUALEN_PHYTOEN_SYN_1"/>
    <property type="match status" value="1"/>
</dbReference>
<dbReference type="PROSITE" id="PS01045">
    <property type="entry name" value="SQUALEN_PHYTOEN_SYN_2"/>
    <property type="match status" value="1"/>
</dbReference>
<feature type="chain" id="PRO_0000290006" description="Squalene synthase">
    <location>
        <begin position="1"/>
        <end position="417"/>
    </location>
</feature>
<feature type="transmembrane region" description="Helical" evidence="3">
    <location>
        <begin position="284"/>
        <end position="304"/>
    </location>
</feature>
<feature type="transmembrane region" description="Helical" evidence="3">
    <location>
        <begin position="384"/>
        <end position="404"/>
    </location>
</feature>
<feature type="binding site" evidence="1">
    <location>
        <position position="52"/>
    </location>
    <ligand>
        <name>NADP(+)</name>
        <dbReference type="ChEBI" id="CHEBI:58349"/>
    </ligand>
</feature>
<feature type="binding site" evidence="1">
    <location>
        <position position="77"/>
    </location>
    <ligand>
        <name>NADP(+)</name>
        <dbReference type="ChEBI" id="CHEBI:58349"/>
    </ligand>
</feature>
<feature type="binding site" evidence="1">
    <location>
        <position position="80"/>
    </location>
    <ligand>
        <name>Mg(2+)</name>
        <dbReference type="ChEBI" id="CHEBI:18420"/>
    </ligand>
</feature>
<feature type="binding site" evidence="1">
    <location>
        <position position="83"/>
    </location>
    <ligand>
        <name>Mg(2+)</name>
        <dbReference type="ChEBI" id="CHEBI:18420"/>
    </ligand>
</feature>
<feature type="binding site" evidence="1">
    <location>
        <position position="84"/>
    </location>
    <ligand>
        <name>Mg(2+)</name>
        <dbReference type="ChEBI" id="CHEBI:18420"/>
    </ligand>
</feature>
<feature type="binding site" evidence="1">
    <location>
        <position position="218"/>
    </location>
    <ligand>
        <name>NADP(+)</name>
        <dbReference type="ChEBI" id="CHEBI:58349"/>
    </ligand>
</feature>
<feature type="binding site" evidence="1">
    <location>
        <position position="315"/>
    </location>
    <ligand>
        <name>NADP(+)</name>
        <dbReference type="ChEBI" id="CHEBI:58349"/>
    </ligand>
</feature>
<feature type="binding site" evidence="1">
    <location>
        <position position="317"/>
    </location>
    <ligand>
        <name>NADP(+)</name>
        <dbReference type="ChEBI" id="CHEBI:58349"/>
    </ligand>
</feature>